<gene>
    <name evidence="1" type="primary">hprK</name>
    <name type="ordered locus">CPF_1261</name>
</gene>
<comment type="function">
    <text evidence="1">Catalyzes the ATP- as well as the pyrophosphate-dependent phosphorylation of a specific serine residue in HPr, a phosphocarrier protein of the phosphoenolpyruvate-dependent sugar phosphotransferase system (PTS). HprK/P also catalyzes the pyrophosphate-producing, inorganic phosphate-dependent dephosphorylation (phosphorolysis) of seryl-phosphorylated HPr (P-Ser-HPr). The two antagonistic activities of HprK/P are regulated by several intracellular metabolites, which change their concentration in response to the absence or presence of rapidly metabolisable carbon sources (glucose, fructose, etc.) in the growth medium. Therefore, by controlling the phosphorylation state of HPr, HPrK/P is a sensor enzyme that plays a major role in the regulation of carbon metabolism and sugar transport: it mediates carbon catabolite repression (CCR), and regulates PTS-catalyzed carbohydrate uptake and inducer exclusion.</text>
</comment>
<comment type="catalytic activity">
    <reaction evidence="1">
        <text>[HPr protein]-L-serine + ATP = [HPr protein]-O-phospho-L-serine + ADP + H(+)</text>
        <dbReference type="Rhea" id="RHEA:46600"/>
        <dbReference type="Rhea" id="RHEA-COMP:11602"/>
        <dbReference type="Rhea" id="RHEA-COMP:11603"/>
        <dbReference type="ChEBI" id="CHEBI:15378"/>
        <dbReference type="ChEBI" id="CHEBI:29999"/>
        <dbReference type="ChEBI" id="CHEBI:30616"/>
        <dbReference type="ChEBI" id="CHEBI:83421"/>
        <dbReference type="ChEBI" id="CHEBI:456216"/>
    </reaction>
</comment>
<comment type="catalytic activity">
    <reaction evidence="1">
        <text>[HPr protein]-O-phospho-L-serine + phosphate + H(+) = [HPr protein]-L-serine + diphosphate</text>
        <dbReference type="Rhea" id="RHEA:46604"/>
        <dbReference type="Rhea" id="RHEA-COMP:11602"/>
        <dbReference type="Rhea" id="RHEA-COMP:11603"/>
        <dbReference type="ChEBI" id="CHEBI:15378"/>
        <dbReference type="ChEBI" id="CHEBI:29999"/>
        <dbReference type="ChEBI" id="CHEBI:33019"/>
        <dbReference type="ChEBI" id="CHEBI:43474"/>
        <dbReference type="ChEBI" id="CHEBI:83421"/>
    </reaction>
</comment>
<comment type="cofactor">
    <cofactor evidence="1">
        <name>Mg(2+)</name>
        <dbReference type="ChEBI" id="CHEBI:18420"/>
    </cofactor>
</comment>
<comment type="subunit">
    <text evidence="1">Homohexamer.</text>
</comment>
<comment type="domain">
    <text evidence="1">The Walker A ATP-binding motif also binds Pi and PPi.</text>
</comment>
<comment type="miscellaneous">
    <text evidence="1">Both phosphorylation and phosphorolysis are carried out by the same active site and suggest a common mechanism for both reactions.</text>
</comment>
<comment type="similarity">
    <text evidence="1">Belongs to the HPrK/P family.</text>
</comment>
<accession>Q0TRN3</accession>
<reference key="1">
    <citation type="journal article" date="2006" name="Genome Res.">
        <title>Skewed genomic variability in strains of the toxigenic bacterial pathogen, Clostridium perfringens.</title>
        <authorList>
            <person name="Myers G.S.A."/>
            <person name="Rasko D.A."/>
            <person name="Cheung J.K."/>
            <person name="Ravel J."/>
            <person name="Seshadri R."/>
            <person name="DeBoy R.T."/>
            <person name="Ren Q."/>
            <person name="Varga J."/>
            <person name="Awad M.M."/>
            <person name="Brinkac L.M."/>
            <person name="Daugherty S.C."/>
            <person name="Haft D.H."/>
            <person name="Dodson R.J."/>
            <person name="Madupu R."/>
            <person name="Nelson W.C."/>
            <person name="Rosovitz M.J."/>
            <person name="Sullivan S.A."/>
            <person name="Khouri H."/>
            <person name="Dimitrov G.I."/>
            <person name="Watkins K.L."/>
            <person name="Mulligan S."/>
            <person name="Benton J."/>
            <person name="Radune D."/>
            <person name="Fisher D.J."/>
            <person name="Atkins H.S."/>
            <person name="Hiscox T."/>
            <person name="Jost B.H."/>
            <person name="Billington S.J."/>
            <person name="Songer J.G."/>
            <person name="McClane B.A."/>
            <person name="Titball R.W."/>
            <person name="Rood J.I."/>
            <person name="Melville S.B."/>
            <person name="Paulsen I.T."/>
        </authorList>
    </citation>
    <scope>NUCLEOTIDE SEQUENCE [LARGE SCALE GENOMIC DNA]</scope>
    <source>
        <strain>ATCC 13124 / DSM 756 / JCM 1290 / NCIMB 6125 / NCTC 8237 / S 107 / Type A</strain>
    </source>
</reference>
<proteinExistence type="inferred from homology"/>
<protein>
    <recommendedName>
        <fullName evidence="1">HPr kinase/phosphorylase</fullName>
        <shortName evidence="1">HPrK/P</shortName>
        <ecNumber evidence="1">2.7.11.-</ecNumber>
        <ecNumber evidence="1">2.7.4.-</ecNumber>
    </recommendedName>
    <alternativeName>
        <fullName evidence="1">HPr(Ser) kinase/phosphorylase</fullName>
    </alternativeName>
</protein>
<keyword id="KW-0067">ATP-binding</keyword>
<keyword id="KW-0119">Carbohydrate metabolism</keyword>
<keyword id="KW-0418">Kinase</keyword>
<keyword id="KW-0460">Magnesium</keyword>
<keyword id="KW-0479">Metal-binding</keyword>
<keyword id="KW-0511">Multifunctional enzyme</keyword>
<keyword id="KW-0547">Nucleotide-binding</keyword>
<keyword id="KW-0723">Serine/threonine-protein kinase</keyword>
<keyword id="KW-0808">Transferase</keyword>
<dbReference type="EC" id="2.7.11.-" evidence="1"/>
<dbReference type="EC" id="2.7.4.-" evidence="1"/>
<dbReference type="EMBL" id="CP000246">
    <property type="protein sequence ID" value="ABG84108.1"/>
    <property type="molecule type" value="Genomic_DNA"/>
</dbReference>
<dbReference type="RefSeq" id="WP_003448672.1">
    <property type="nucleotide sequence ID" value="NC_008261.1"/>
</dbReference>
<dbReference type="SMR" id="Q0TRN3"/>
<dbReference type="STRING" id="195103.CPF_1261"/>
<dbReference type="PaxDb" id="195103-CPF_1261"/>
<dbReference type="GeneID" id="93002464"/>
<dbReference type="KEGG" id="cpf:CPF_1261"/>
<dbReference type="eggNOG" id="COG1493">
    <property type="taxonomic scope" value="Bacteria"/>
</dbReference>
<dbReference type="HOGENOM" id="CLU_052030_0_1_9"/>
<dbReference type="Proteomes" id="UP000001823">
    <property type="component" value="Chromosome"/>
</dbReference>
<dbReference type="GO" id="GO:0005524">
    <property type="term" value="F:ATP binding"/>
    <property type="evidence" value="ECO:0007669"/>
    <property type="project" value="UniProtKB-UniRule"/>
</dbReference>
<dbReference type="GO" id="GO:0000287">
    <property type="term" value="F:magnesium ion binding"/>
    <property type="evidence" value="ECO:0007669"/>
    <property type="project" value="UniProtKB-UniRule"/>
</dbReference>
<dbReference type="GO" id="GO:0000155">
    <property type="term" value="F:phosphorelay sensor kinase activity"/>
    <property type="evidence" value="ECO:0007669"/>
    <property type="project" value="InterPro"/>
</dbReference>
<dbReference type="GO" id="GO:0004674">
    <property type="term" value="F:protein serine/threonine kinase activity"/>
    <property type="evidence" value="ECO:0007669"/>
    <property type="project" value="UniProtKB-KW"/>
</dbReference>
<dbReference type="GO" id="GO:0004712">
    <property type="term" value="F:protein serine/threonine/tyrosine kinase activity"/>
    <property type="evidence" value="ECO:0007669"/>
    <property type="project" value="UniProtKB-UniRule"/>
</dbReference>
<dbReference type="GO" id="GO:0006109">
    <property type="term" value="P:regulation of carbohydrate metabolic process"/>
    <property type="evidence" value="ECO:0007669"/>
    <property type="project" value="UniProtKB-UniRule"/>
</dbReference>
<dbReference type="CDD" id="cd01918">
    <property type="entry name" value="HprK_C"/>
    <property type="match status" value="1"/>
</dbReference>
<dbReference type="FunFam" id="3.40.50.300:FF:000174">
    <property type="entry name" value="HPr kinase/phosphorylase"/>
    <property type="match status" value="1"/>
</dbReference>
<dbReference type="Gene3D" id="3.40.1390.20">
    <property type="entry name" value="HprK N-terminal domain-like"/>
    <property type="match status" value="1"/>
</dbReference>
<dbReference type="Gene3D" id="3.40.50.300">
    <property type="entry name" value="P-loop containing nucleotide triphosphate hydrolases"/>
    <property type="match status" value="1"/>
</dbReference>
<dbReference type="HAMAP" id="MF_01249">
    <property type="entry name" value="HPr_kinase"/>
    <property type="match status" value="1"/>
</dbReference>
<dbReference type="InterPro" id="IPR003755">
    <property type="entry name" value="HPr(Ser)_kin/Pase"/>
</dbReference>
<dbReference type="InterPro" id="IPR011104">
    <property type="entry name" value="Hpr_kin/Pase_C"/>
</dbReference>
<dbReference type="InterPro" id="IPR011126">
    <property type="entry name" value="Hpr_kin/Pase_Hpr_N"/>
</dbReference>
<dbReference type="InterPro" id="IPR027417">
    <property type="entry name" value="P-loop_NTPase"/>
</dbReference>
<dbReference type="InterPro" id="IPR028979">
    <property type="entry name" value="Ser_kin/Pase_Hpr-like_N_sf"/>
</dbReference>
<dbReference type="NCBIfam" id="TIGR00679">
    <property type="entry name" value="hpr-ser"/>
    <property type="match status" value="1"/>
</dbReference>
<dbReference type="PANTHER" id="PTHR30305:SF1">
    <property type="entry name" value="HPR KINASE_PHOSPHORYLASE"/>
    <property type="match status" value="1"/>
</dbReference>
<dbReference type="PANTHER" id="PTHR30305">
    <property type="entry name" value="PROTEIN YJDM-RELATED"/>
    <property type="match status" value="1"/>
</dbReference>
<dbReference type="Pfam" id="PF07475">
    <property type="entry name" value="Hpr_kinase_C"/>
    <property type="match status" value="1"/>
</dbReference>
<dbReference type="Pfam" id="PF02603">
    <property type="entry name" value="Hpr_kinase_N"/>
    <property type="match status" value="1"/>
</dbReference>
<dbReference type="SUPFAM" id="SSF75138">
    <property type="entry name" value="HprK N-terminal domain-like"/>
    <property type="match status" value="1"/>
</dbReference>
<dbReference type="SUPFAM" id="SSF53795">
    <property type="entry name" value="PEP carboxykinase-like"/>
    <property type="match status" value="1"/>
</dbReference>
<feature type="chain" id="PRO_1000067146" description="HPr kinase/phosphorylase">
    <location>
        <begin position="1"/>
        <end position="307"/>
    </location>
</feature>
<feature type="region of interest" description="Important for the catalytic mechanism of both phosphorylation and dephosphorylation" evidence="1">
    <location>
        <begin position="198"/>
        <end position="207"/>
    </location>
</feature>
<feature type="region of interest" description="Important for the catalytic mechanism of dephosphorylation" evidence="1">
    <location>
        <begin position="261"/>
        <end position="266"/>
    </location>
</feature>
<feature type="active site" evidence="1">
    <location>
        <position position="136"/>
    </location>
</feature>
<feature type="active site" evidence="1">
    <location>
        <position position="157"/>
    </location>
</feature>
<feature type="active site" description="Proton acceptor; for phosphorylation activity. Proton donor; for dephosphorylation activity" evidence="1">
    <location>
        <position position="175"/>
    </location>
</feature>
<feature type="active site" evidence="1">
    <location>
        <position position="240"/>
    </location>
</feature>
<feature type="binding site" evidence="1">
    <location>
        <begin position="151"/>
        <end position="158"/>
    </location>
    <ligand>
        <name>ATP</name>
        <dbReference type="ChEBI" id="CHEBI:30616"/>
    </ligand>
</feature>
<feature type="binding site" evidence="1">
    <location>
        <position position="158"/>
    </location>
    <ligand>
        <name>Mg(2+)</name>
        <dbReference type="ChEBI" id="CHEBI:18420"/>
    </ligand>
</feature>
<feature type="binding site" evidence="1">
    <location>
        <position position="199"/>
    </location>
    <ligand>
        <name>Mg(2+)</name>
        <dbReference type="ChEBI" id="CHEBI:18420"/>
    </ligand>
</feature>
<sequence length="307" mass="34848">MGVTIEKLIKDFSLEVIQTGEENVPINVSDVNRPGLQLAGFYNYFAPERIQVIGKAEWSFLEDMSPDLRKKRLNKFFSFDISCLIITRGLEIHEELLKAARKRNLWILRSDMVTTKFISKITMYLSDKMAPETRLHGVLVDVYGIGMLITGESGIGKSETALELIKRGHRLVTDDAVDIKEIDGDLIGRSPEITFGMLEVRGMGIIDVSALYGLSSILNSKQIKIIIHFEHWKDDGDYDRLGVNDEYQDILGVKVKKLRVPIRPGRNIAVIIEAAAANYRYQRMSDISPVDIIEKRMLESMEKESKI</sequence>
<name>HPRK_CLOP1</name>
<evidence type="ECO:0000255" key="1">
    <source>
        <dbReference type="HAMAP-Rule" id="MF_01249"/>
    </source>
</evidence>
<organism>
    <name type="scientific">Clostridium perfringens (strain ATCC 13124 / DSM 756 / JCM 1290 / NCIMB 6125 / NCTC 8237 / Type A)</name>
    <dbReference type="NCBI Taxonomy" id="195103"/>
    <lineage>
        <taxon>Bacteria</taxon>
        <taxon>Bacillati</taxon>
        <taxon>Bacillota</taxon>
        <taxon>Clostridia</taxon>
        <taxon>Eubacteriales</taxon>
        <taxon>Clostridiaceae</taxon>
        <taxon>Clostridium</taxon>
    </lineage>
</organism>